<name>ARHGB_RAT</name>
<evidence type="ECO:0000250" key="1"/>
<evidence type="ECO:0000250" key="2">
    <source>
        <dbReference type="UniProtKB" id="O15085"/>
    </source>
</evidence>
<evidence type="ECO:0000255" key="3"/>
<evidence type="ECO:0000255" key="4">
    <source>
        <dbReference type="PROSITE-ProRule" id="PRU00062"/>
    </source>
</evidence>
<evidence type="ECO:0000255" key="5">
    <source>
        <dbReference type="PROSITE-ProRule" id="PRU00143"/>
    </source>
</evidence>
<evidence type="ECO:0000255" key="6">
    <source>
        <dbReference type="PROSITE-ProRule" id="PRU00145"/>
    </source>
</evidence>
<evidence type="ECO:0000255" key="7">
    <source>
        <dbReference type="PROSITE-ProRule" id="PRU00171"/>
    </source>
</evidence>
<evidence type="ECO:0000256" key="8">
    <source>
        <dbReference type="SAM" id="MobiDB-lite"/>
    </source>
</evidence>
<evidence type="ECO:0000269" key="9">
    <source>
    </source>
</evidence>
<evidence type="ECO:0007744" key="10">
    <source>
    </source>
</evidence>
<evidence type="ECO:0007829" key="11">
    <source>
        <dbReference type="PDB" id="3CX8"/>
    </source>
</evidence>
<gene>
    <name type="primary">Arhgef11</name>
</gene>
<sequence>MSIRLPHSIDRSASKKQSHLSSPIASWLSSLSSLGDSTPERTSPSHHRQPSDTSETTAGLVQRCVIIQKDQHGFGFTVSGDRIVLVQSVRPGGAAMKAGVKEGDRIIKVNGTMVTNSSHLEVVKLIKSGAYAALTLLGSSPPSVGVSGLQQNPSVAGVLRVNPIIPPPPPPPPLPPPQHITGPKPLQDPEVQKHATQILWNMLRQEEEELQDILPPCGETSQRTCEGRLSVDSQEADSGLDSGTERFPSISESLMNRNSVLSDPGLDSPQTSPVILARVAQHHRRQGSDAALLPLNHQGIDQSPKPLIIGPEEDYDPGYFNNESDIIFQDLEKLKSHPAYLVVFLRYILSQADPGPLLFYLCSEVYQQTNPKDSRSLGKDIWNIFLEKNAPLRVKIPEMLQAEIDLRLRNNEDPRNVLCEAQEAVMLEIQEQINDYRSKRTLGLGSLYGENDLLGLDGDPLRERQMAEKQLAALGDILSKYEEDRSAPMDFAVNTFMSHAGIRLRESRSSCTAEKTQSAPDKDKWLPFFPKTKKQSSNSKKEKDALEDKKRNPILRYIGKPKSSSQSIKPGNVRNIIQHFENSHQYDVPEPGTQRLSTGSFPEDLLESDSSRSEIRLGRSGSLKGREEMKRSRKAENVPRPRSDVDMDAAAEAARLHQSASSSASSLSTRSLENPTPPFTPKMGRRSIESPNLGFCTDVILPHLLEDDLGQLSDLEPEPEVQNWQHTVGKDVVANLTQREIDRQEVINELFVTEASHLRTLRVLDLIFYQRMRKENLMPREELARLFPNLPELIEIHNSWCEAMKKLREEGPIIRDISDPMLARFDGPAREELQQVAAQFCSYQSVALELIRTKQRKESRFQLFMQEAESHPQCRRLQLRDLIVSEMQRLTKYPLLLENIIKHTEGGTSEHEKLCRARDQCREILKFVNEAVKQTENRHRLEGYQKRLDATALERASNPLAAEFKSLDLTTRKMIHEGPLTWRISKDKTLDLQVLLLEDLVVLLQRQEERLLLKCHSKTAVGSSDSKQTFSPVLKLNAVLIRSVATDKRAFFIICTSELGPPQIYELVALTSSDKNIWMELLEEAVQNATKHPGAAPIPIHPSPPGSQEPAYQGSTSSRVEINDSEVYHTEKEPKKLPEGPGPEQRVQDKQLIAQGEPVQEEDEEELRTLPRAPPSLDGENRGIRTRDPVLLALTGPLLMEGLADAALEDVENLRHLILWSLLPGHTVKTQAAGEPEDDLTPTPSVVSITSHPWDPGSPGQAPTISDSTRLARPEGSQPEGEDVAVSSLAHLPPRTRSSGVWDSPELDRNPAAEAASTEPAASYKVVRKVSLLPGGGVGAAKVAGSNAIPDSGQSESELSEVEGGAQATGNCFYVSMPAGPLDSSTEPTGTPPSPSQCHSLPAWPTEPQPYRGVRGGQCSSLVRRDVDVIFHTIEQLTIKLHRLKDMELAHRELLKSLGGESSGGTTPVGSFHTEAARWTDYSLSPPAKEALASDSQNGQEQGSCPEEGSDIALEDSATDTAVSPGP</sequence>
<protein>
    <recommendedName>
        <fullName>Rho guanine nucleotide exchange factor 11</fullName>
    </recommendedName>
    <alternativeName>
        <fullName>RhoGEF glutamate transport modulator GTRAP48</fullName>
    </alternativeName>
</protein>
<comment type="function">
    <text evidence="1 9">May play a role in the regulation of RhoA GTPase by guanine nucleotide-binding alpha-12 (GNA12) and alpha-13 (GNA13). Acts as guanine nucleotide exchange factor (GEF) for RhoA GTPase and may act as GTPase-activating protein (GAP) for GNA12 and GNA13. Involved in neurotrophin-induced neurite outgrowth (By similarity).</text>
</comment>
<comment type="subunit">
    <text evidence="1 2">Interacts with RHOA, GNA13 and SLC1A6. Interacts with GNA12, PLXNB1 and PLXNB2 (By similarity). Interacts (via DH domain) with GCSAM (via C-terminus) (By similarity). Found in a complex with ARHGEF11 and ARHGEF12; binding to ARHGEF11 and ARHGEF12 enhances CDC42 GEF activity of PLEKHG4B, and PLEKHG4B, in turn, inhibits ARHGEF11- and ARHGEF12-mediated RHOA activation (By similarity).</text>
</comment>
<comment type="interaction">
    <interactant intactId="EBI-15735216">
        <id>Q9ES67</id>
    </interactant>
    <interactant intactId="EBI-2255627">
        <id>P27601</id>
        <label>Gna13</label>
    </interactant>
    <organismsDiffer>true</organismsDiffer>
    <experiments>3</experiments>
</comment>
<comment type="subcellular location">
    <subcellularLocation>
        <location evidence="1">Cytoplasm</location>
    </subcellularLocation>
    <subcellularLocation>
        <location evidence="1">Membrane</location>
    </subcellularLocation>
    <text evidence="1">Translocated to the membrane upon stimulation.</text>
</comment>
<comment type="PTM">
    <text evidence="1">Phosphorylated by MAP kinase p38 (MAPK11, MAPK12, MAPK13 and/or MAPK14).</text>
</comment>
<comment type="PTM">
    <text evidence="1">Ubiquitinated by the BCR(KLHL20) E3 ubiquitin ligase complex when previously phosphorylated by MAP kinase p38 (MAPK11, MAPK12, MAPK13 and/or MAPK14), leading to its degradation, thereby restricting RhoA activity and facilitating growth cone spreading and neurite outgrowth.</text>
</comment>
<accession>Q9ES67</accession>
<organism>
    <name type="scientific">Rattus norvegicus</name>
    <name type="common">Rat</name>
    <dbReference type="NCBI Taxonomy" id="10116"/>
    <lineage>
        <taxon>Eukaryota</taxon>
        <taxon>Metazoa</taxon>
        <taxon>Chordata</taxon>
        <taxon>Craniata</taxon>
        <taxon>Vertebrata</taxon>
        <taxon>Euteleostomi</taxon>
        <taxon>Mammalia</taxon>
        <taxon>Eutheria</taxon>
        <taxon>Euarchontoglires</taxon>
        <taxon>Glires</taxon>
        <taxon>Rodentia</taxon>
        <taxon>Myomorpha</taxon>
        <taxon>Muroidea</taxon>
        <taxon>Muridae</taxon>
        <taxon>Murinae</taxon>
        <taxon>Rattus</taxon>
    </lineage>
</organism>
<dbReference type="EMBL" id="AF225961">
    <property type="protein sequence ID" value="AAG28597.1"/>
    <property type="molecule type" value="mRNA"/>
</dbReference>
<dbReference type="RefSeq" id="NP_076472.1">
    <property type="nucleotide sequence ID" value="NM_023982.1"/>
</dbReference>
<dbReference type="PDB" id="3CX6">
    <property type="method" value="X-ray"/>
    <property type="resolution" value="2.50 A"/>
    <property type="chains" value="B=307-508"/>
</dbReference>
<dbReference type="PDB" id="3CX7">
    <property type="method" value="X-ray"/>
    <property type="resolution" value="2.25 A"/>
    <property type="chains" value="B=307-508"/>
</dbReference>
<dbReference type="PDB" id="3CX8">
    <property type="method" value="X-ray"/>
    <property type="resolution" value="2.00 A"/>
    <property type="chains" value="B=307-508"/>
</dbReference>
<dbReference type="PDBsum" id="3CX6"/>
<dbReference type="PDBsum" id="3CX7"/>
<dbReference type="PDBsum" id="3CX8"/>
<dbReference type="SMR" id="Q9ES67"/>
<dbReference type="DIP" id="DIP-46242N"/>
<dbReference type="FunCoup" id="Q9ES67">
    <property type="interactions" value="3038"/>
</dbReference>
<dbReference type="IntAct" id="Q9ES67">
    <property type="interactions" value="1"/>
</dbReference>
<dbReference type="STRING" id="10116.ENSRNOP00000070996"/>
<dbReference type="GlyGen" id="Q9ES67">
    <property type="glycosylation" value="1 site"/>
</dbReference>
<dbReference type="iPTMnet" id="Q9ES67"/>
<dbReference type="PhosphoSitePlus" id="Q9ES67"/>
<dbReference type="SwissPalm" id="Q9ES67"/>
<dbReference type="jPOST" id="Q9ES67"/>
<dbReference type="PaxDb" id="10116-ENSRNOP00000020717"/>
<dbReference type="PeptideAtlas" id="Q9ES67"/>
<dbReference type="GeneID" id="78966"/>
<dbReference type="KEGG" id="rno:78966"/>
<dbReference type="UCSC" id="RGD:619705">
    <property type="organism name" value="rat"/>
</dbReference>
<dbReference type="AGR" id="RGD:619705"/>
<dbReference type="CTD" id="9826"/>
<dbReference type="RGD" id="619705">
    <property type="gene designation" value="Arhgef11"/>
</dbReference>
<dbReference type="eggNOG" id="KOG3520">
    <property type="taxonomic scope" value="Eukaryota"/>
</dbReference>
<dbReference type="InParanoid" id="Q9ES67"/>
<dbReference type="PhylomeDB" id="Q9ES67"/>
<dbReference type="Reactome" id="R-RNO-193648">
    <property type="pathway name" value="NRAGE signals death through JNK"/>
</dbReference>
<dbReference type="Reactome" id="R-RNO-416482">
    <property type="pathway name" value="G alpha (12/13) signalling events"/>
</dbReference>
<dbReference type="Reactome" id="R-RNO-416572">
    <property type="pathway name" value="Sema4D induced cell migration and growth-cone collapse"/>
</dbReference>
<dbReference type="Reactome" id="R-RNO-8980692">
    <property type="pathway name" value="RHOA GTPase cycle"/>
</dbReference>
<dbReference type="Reactome" id="R-RNO-9013026">
    <property type="pathway name" value="RHOB GTPase cycle"/>
</dbReference>
<dbReference type="Reactome" id="R-RNO-9013148">
    <property type="pathway name" value="CDC42 GTPase cycle"/>
</dbReference>
<dbReference type="Reactome" id="R-RNO-9013149">
    <property type="pathway name" value="RAC1 GTPase cycle"/>
</dbReference>
<dbReference type="EvolutionaryTrace" id="Q9ES67"/>
<dbReference type="PRO" id="PR:Q9ES67"/>
<dbReference type="Proteomes" id="UP000002494">
    <property type="component" value="Unplaced"/>
</dbReference>
<dbReference type="GO" id="GO:0005737">
    <property type="term" value="C:cytoplasm"/>
    <property type="evidence" value="ECO:0000266"/>
    <property type="project" value="RGD"/>
</dbReference>
<dbReference type="GO" id="GO:0016020">
    <property type="term" value="C:membrane"/>
    <property type="evidence" value="ECO:0007669"/>
    <property type="project" value="UniProtKB-SubCell"/>
</dbReference>
<dbReference type="GO" id="GO:0001664">
    <property type="term" value="F:G protein-coupled receptor binding"/>
    <property type="evidence" value="ECO:0000266"/>
    <property type="project" value="RGD"/>
</dbReference>
<dbReference type="GO" id="GO:0005096">
    <property type="term" value="F:GTPase activator activity"/>
    <property type="evidence" value="ECO:0007669"/>
    <property type="project" value="UniProtKB-KW"/>
</dbReference>
<dbReference type="GO" id="GO:0005085">
    <property type="term" value="F:guanyl-nucleotide exchange factor activity"/>
    <property type="evidence" value="ECO:0000314"/>
    <property type="project" value="RGD"/>
</dbReference>
<dbReference type="GO" id="GO:0007186">
    <property type="term" value="P:G protein-coupled receptor signaling pathway"/>
    <property type="evidence" value="ECO:0000266"/>
    <property type="project" value="RGD"/>
</dbReference>
<dbReference type="GO" id="GO:0045893">
    <property type="term" value="P:positive regulation of DNA-templated transcription"/>
    <property type="evidence" value="ECO:0000266"/>
    <property type="project" value="RGD"/>
</dbReference>
<dbReference type="GO" id="GO:0002038">
    <property type="term" value="P:positive regulation of L-glutamate import across plasma membrane"/>
    <property type="evidence" value="ECO:0000315"/>
    <property type="project" value="RGD"/>
</dbReference>
<dbReference type="GO" id="GO:0007266">
    <property type="term" value="P:Rho protein signal transduction"/>
    <property type="evidence" value="ECO:0000266"/>
    <property type="project" value="RGD"/>
</dbReference>
<dbReference type="CDD" id="cd23069">
    <property type="entry name" value="PDZ_ARHGEF11-12-like"/>
    <property type="match status" value="1"/>
</dbReference>
<dbReference type="CDD" id="cd13391">
    <property type="entry name" value="PH_PRG"/>
    <property type="match status" value="1"/>
</dbReference>
<dbReference type="CDD" id="cd08753">
    <property type="entry name" value="RGS_PDZRhoGEF"/>
    <property type="match status" value="1"/>
</dbReference>
<dbReference type="CDD" id="cd00160">
    <property type="entry name" value="RhoGEF"/>
    <property type="match status" value="1"/>
</dbReference>
<dbReference type="FunFam" id="1.10.167.10:FF:000010">
    <property type="entry name" value="Rho guanine nucleotide exchange factor (GEF) 11"/>
    <property type="match status" value="1"/>
</dbReference>
<dbReference type="FunFam" id="1.20.900.10:FF:000006">
    <property type="entry name" value="Rho guanine nucleotide exchange factor (GEF) 11"/>
    <property type="match status" value="1"/>
</dbReference>
<dbReference type="FunFam" id="2.30.42.10:FF:000033">
    <property type="entry name" value="Rho guanine nucleotide exchange factor (GEF) 11"/>
    <property type="match status" value="1"/>
</dbReference>
<dbReference type="FunFam" id="2.30.29.30:FF:000072">
    <property type="entry name" value="Rho guanine nucleotide exchange factor 1"/>
    <property type="match status" value="1"/>
</dbReference>
<dbReference type="Gene3D" id="2.30.42.10">
    <property type="match status" value="1"/>
</dbReference>
<dbReference type="Gene3D" id="1.20.900.10">
    <property type="entry name" value="Dbl homology (DH) domain"/>
    <property type="match status" value="1"/>
</dbReference>
<dbReference type="Gene3D" id="2.30.29.30">
    <property type="entry name" value="Pleckstrin-homology domain (PH domain)/Phosphotyrosine-binding domain (PTB)"/>
    <property type="match status" value="1"/>
</dbReference>
<dbReference type="Gene3D" id="1.10.167.10">
    <property type="entry name" value="Regulator of G-protein Signalling 4, domain 2"/>
    <property type="match status" value="1"/>
</dbReference>
<dbReference type="InterPro" id="IPR035899">
    <property type="entry name" value="DBL_dom_sf"/>
</dbReference>
<dbReference type="InterPro" id="IPR000219">
    <property type="entry name" value="DH_dom"/>
</dbReference>
<dbReference type="InterPro" id="IPR001331">
    <property type="entry name" value="GDS_CDC24_CS"/>
</dbReference>
<dbReference type="InterPro" id="IPR001478">
    <property type="entry name" value="PDZ"/>
</dbReference>
<dbReference type="InterPro" id="IPR036034">
    <property type="entry name" value="PDZ_sf"/>
</dbReference>
<dbReference type="InterPro" id="IPR037889">
    <property type="entry name" value="PDZRhoGEF_RGS"/>
</dbReference>
<dbReference type="InterPro" id="IPR011993">
    <property type="entry name" value="PH-like_dom_sf"/>
</dbReference>
<dbReference type="InterPro" id="IPR041020">
    <property type="entry name" value="PH_16"/>
</dbReference>
<dbReference type="InterPro" id="IPR001849">
    <property type="entry name" value="PH_domain"/>
</dbReference>
<dbReference type="InterPro" id="IPR037803">
    <property type="entry name" value="PRG_PH"/>
</dbReference>
<dbReference type="InterPro" id="IPR016137">
    <property type="entry name" value="RGS"/>
</dbReference>
<dbReference type="InterPro" id="IPR015212">
    <property type="entry name" value="RGS-like_dom"/>
</dbReference>
<dbReference type="InterPro" id="IPR036305">
    <property type="entry name" value="RGS_sf"/>
</dbReference>
<dbReference type="InterPro" id="IPR044926">
    <property type="entry name" value="RGS_subdomain_2"/>
</dbReference>
<dbReference type="PANTHER" id="PTHR45872:SF1">
    <property type="entry name" value="RHO GUANINE NUCLEOTIDE EXCHANGE FACTOR 11"/>
    <property type="match status" value="1"/>
</dbReference>
<dbReference type="PANTHER" id="PTHR45872">
    <property type="entry name" value="RHO GUANINE NUCLEOTIDE EXCHANGE FACTOR 2, ISOFORM D"/>
    <property type="match status" value="1"/>
</dbReference>
<dbReference type="Pfam" id="PF00595">
    <property type="entry name" value="PDZ"/>
    <property type="match status" value="1"/>
</dbReference>
<dbReference type="Pfam" id="PF17838">
    <property type="entry name" value="PH_16"/>
    <property type="match status" value="1"/>
</dbReference>
<dbReference type="Pfam" id="PF09128">
    <property type="entry name" value="RGS-like"/>
    <property type="match status" value="1"/>
</dbReference>
<dbReference type="Pfam" id="PF00621">
    <property type="entry name" value="RhoGEF"/>
    <property type="match status" value="1"/>
</dbReference>
<dbReference type="SMART" id="SM00228">
    <property type="entry name" value="PDZ"/>
    <property type="match status" value="1"/>
</dbReference>
<dbReference type="SMART" id="SM00233">
    <property type="entry name" value="PH"/>
    <property type="match status" value="1"/>
</dbReference>
<dbReference type="SMART" id="SM00315">
    <property type="entry name" value="RGS"/>
    <property type="match status" value="1"/>
</dbReference>
<dbReference type="SMART" id="SM00325">
    <property type="entry name" value="RhoGEF"/>
    <property type="match status" value="1"/>
</dbReference>
<dbReference type="SUPFAM" id="SSF48065">
    <property type="entry name" value="DBL homology domain (DH-domain)"/>
    <property type="match status" value="1"/>
</dbReference>
<dbReference type="SUPFAM" id="SSF50156">
    <property type="entry name" value="PDZ domain-like"/>
    <property type="match status" value="1"/>
</dbReference>
<dbReference type="SUPFAM" id="SSF50729">
    <property type="entry name" value="PH domain-like"/>
    <property type="match status" value="1"/>
</dbReference>
<dbReference type="SUPFAM" id="SSF48097">
    <property type="entry name" value="Regulator of G-protein signaling, RGS"/>
    <property type="match status" value="1"/>
</dbReference>
<dbReference type="PROSITE" id="PS00741">
    <property type="entry name" value="DH_1"/>
    <property type="match status" value="1"/>
</dbReference>
<dbReference type="PROSITE" id="PS50010">
    <property type="entry name" value="DH_2"/>
    <property type="match status" value="1"/>
</dbReference>
<dbReference type="PROSITE" id="PS50106">
    <property type="entry name" value="PDZ"/>
    <property type="match status" value="1"/>
</dbReference>
<dbReference type="PROSITE" id="PS50003">
    <property type="entry name" value="PH_DOMAIN"/>
    <property type="match status" value="1"/>
</dbReference>
<dbReference type="PROSITE" id="PS50132">
    <property type="entry name" value="RGS"/>
    <property type="match status" value="1"/>
</dbReference>
<feature type="chain" id="PRO_0000080929" description="Rho guanine nucleotide exchange factor 11">
    <location>
        <begin position="1"/>
        <end position="1527"/>
    </location>
</feature>
<feature type="domain" description="PDZ" evidence="5">
    <location>
        <begin position="64"/>
        <end position="143"/>
    </location>
</feature>
<feature type="domain" description="RGSL" evidence="7">
    <location>
        <begin position="323"/>
        <end position="503"/>
    </location>
</feature>
<feature type="domain" description="DH" evidence="4">
    <location>
        <begin position="742"/>
        <end position="931"/>
    </location>
</feature>
<feature type="domain" description="PH" evidence="6">
    <location>
        <begin position="973"/>
        <end position="1087"/>
    </location>
</feature>
<feature type="region of interest" description="Disordered" evidence="8">
    <location>
        <begin position="1"/>
        <end position="56"/>
    </location>
</feature>
<feature type="region of interest" description="Disordered" evidence="8">
    <location>
        <begin position="216"/>
        <end position="247"/>
    </location>
</feature>
<feature type="region of interest" description="Disordered" evidence="8">
    <location>
        <begin position="506"/>
        <end position="569"/>
    </location>
</feature>
<feature type="region of interest" description="Disordered" evidence="8">
    <location>
        <begin position="582"/>
        <end position="687"/>
    </location>
</feature>
<feature type="region of interest" description="Disordered" evidence="8">
    <location>
        <begin position="1090"/>
        <end position="1184"/>
    </location>
</feature>
<feature type="region of interest" description="Disordered" evidence="8">
    <location>
        <begin position="1231"/>
        <end position="1321"/>
    </location>
</feature>
<feature type="region of interest" description="Disordered" evidence="8">
    <location>
        <begin position="1379"/>
        <end position="1411"/>
    </location>
</feature>
<feature type="region of interest" description="Disordered" evidence="8">
    <location>
        <begin position="1480"/>
        <end position="1527"/>
    </location>
</feature>
<feature type="coiled-coil region" evidence="3">
    <location>
        <begin position="461"/>
        <end position="487"/>
    </location>
</feature>
<feature type="compositionally biased region" description="Low complexity" evidence="8">
    <location>
        <begin position="19"/>
        <end position="37"/>
    </location>
</feature>
<feature type="compositionally biased region" description="Polar residues" evidence="8">
    <location>
        <begin position="509"/>
        <end position="519"/>
    </location>
</feature>
<feature type="compositionally biased region" description="Basic and acidic residues" evidence="8">
    <location>
        <begin position="539"/>
        <end position="551"/>
    </location>
</feature>
<feature type="compositionally biased region" description="Basic and acidic residues" evidence="8">
    <location>
        <begin position="624"/>
        <end position="645"/>
    </location>
</feature>
<feature type="compositionally biased region" description="Low complexity" evidence="8">
    <location>
        <begin position="656"/>
        <end position="672"/>
    </location>
</feature>
<feature type="compositionally biased region" description="Basic and acidic residues" evidence="8">
    <location>
        <begin position="1126"/>
        <end position="1138"/>
    </location>
</feature>
<feature type="compositionally biased region" description="Polar residues" evidence="8">
    <location>
        <begin position="1242"/>
        <end position="1251"/>
    </location>
</feature>
<feature type="compositionally biased region" description="Low complexity" evidence="8">
    <location>
        <begin position="1312"/>
        <end position="1321"/>
    </location>
</feature>
<feature type="compositionally biased region" description="Polar residues" evidence="8">
    <location>
        <begin position="1494"/>
        <end position="1503"/>
    </location>
</feature>
<feature type="compositionally biased region" description="Acidic residues" evidence="8">
    <location>
        <begin position="1508"/>
        <end position="1518"/>
    </location>
</feature>
<feature type="modified residue" description="Phosphoserine" evidence="2">
    <location>
        <position position="2"/>
    </location>
</feature>
<feature type="modified residue" description="Phosphoserine" evidence="10">
    <location>
        <position position="30"/>
    </location>
</feature>
<feature type="modified residue" description="Phosphoserine" evidence="2">
    <location>
        <position position="32"/>
    </location>
</feature>
<feature type="modified residue" description="Phosphoserine" evidence="10">
    <location>
        <position position="51"/>
    </location>
</feature>
<feature type="modified residue" description="Phosphoserine" evidence="2">
    <location>
        <position position="262"/>
    </location>
</feature>
<feature type="modified residue" description="Phosphoserine" evidence="10">
    <location>
        <position position="268"/>
    </location>
</feature>
<feature type="modified residue" description="Phosphothreonine" evidence="2">
    <location>
        <position position="271"/>
    </location>
</feature>
<feature type="modified residue" description="Phosphoserine" evidence="10">
    <location>
        <position position="272"/>
    </location>
</feature>
<feature type="modified residue" description="Phosphoserine" evidence="10">
    <location>
        <position position="288"/>
    </location>
</feature>
<feature type="modified residue" description="Phosphoserine" evidence="2">
    <location>
        <position position="643"/>
    </location>
</feature>
<feature type="modified residue" description="Phosphoserine" evidence="2">
    <location>
        <position position="671"/>
    </location>
</feature>
<feature type="modified residue" description="Phosphothreonine" evidence="10">
    <location>
        <position position="676"/>
    </location>
</feature>
<feature type="modified residue" description="Phosphothreonine" evidence="10">
    <location>
        <position position="680"/>
    </location>
</feature>
<feature type="modified residue" description="Phosphoserine" evidence="2">
    <location>
        <position position="1299"/>
    </location>
</feature>
<feature type="modified residue" description="Phosphoserine" evidence="2">
    <location>
        <position position="1304"/>
    </location>
</feature>
<feature type="modified residue" description="Phosphoserine" evidence="10">
    <location>
        <position position="1462"/>
    </location>
</feature>
<feature type="modified residue" description="Phosphoserine" evidence="10">
    <location>
        <position position="1463"/>
    </location>
</feature>
<feature type="modified residue" description="Phosphothreonine" evidence="2">
    <location>
        <position position="1467"/>
    </location>
</feature>
<feature type="modified residue" description="Phosphothreonine" evidence="2">
    <location>
        <position position="1480"/>
    </location>
</feature>
<feature type="modified residue" description="Phosphoserine" evidence="10">
    <location>
        <position position="1485"/>
    </location>
</feature>
<feature type="helix" evidence="11">
    <location>
        <begin position="323"/>
        <end position="329"/>
    </location>
</feature>
<feature type="helix" evidence="11">
    <location>
        <begin position="331"/>
        <end position="335"/>
    </location>
</feature>
<feature type="helix" evidence="11">
    <location>
        <begin position="338"/>
        <end position="351"/>
    </location>
</feature>
<feature type="helix" evidence="11">
    <location>
        <begin position="355"/>
        <end position="367"/>
    </location>
</feature>
<feature type="turn" evidence="11">
    <location>
        <begin position="371"/>
        <end position="373"/>
    </location>
</feature>
<feature type="helix" evidence="11">
    <location>
        <begin position="375"/>
        <end position="385"/>
    </location>
</feature>
<feature type="helix" evidence="11">
    <location>
        <begin position="398"/>
        <end position="409"/>
    </location>
</feature>
<feature type="helix" evidence="11">
    <location>
        <begin position="415"/>
        <end position="441"/>
    </location>
</feature>
<feature type="helix" evidence="11">
    <location>
        <begin position="445"/>
        <end position="448"/>
    </location>
</feature>
<feature type="helix" evidence="11">
    <location>
        <begin position="450"/>
        <end position="453"/>
    </location>
</feature>
<feature type="helix" evidence="11">
    <location>
        <begin position="460"/>
        <end position="473"/>
    </location>
</feature>
<feature type="helix" evidence="11">
    <location>
        <begin position="475"/>
        <end position="478"/>
    </location>
</feature>
<feature type="helix" evidence="11">
    <location>
        <begin position="483"/>
        <end position="500"/>
    </location>
</feature>
<proteinExistence type="evidence at protein level"/>
<keyword id="KW-0002">3D-structure</keyword>
<keyword id="KW-0175">Coiled coil</keyword>
<keyword id="KW-0963">Cytoplasm</keyword>
<keyword id="KW-0343">GTPase activation</keyword>
<keyword id="KW-0344">Guanine-nucleotide releasing factor</keyword>
<keyword id="KW-0472">Membrane</keyword>
<keyword id="KW-0597">Phosphoprotein</keyword>
<keyword id="KW-1185">Reference proteome</keyword>
<keyword id="KW-0832">Ubl conjugation</keyword>
<reference key="1">
    <citation type="journal article" date="2001" name="Nature">
        <title>Modulation of the neuronal glutamate transporter EAAT4 by two interacting proteins.</title>
        <authorList>
            <person name="Jackson M."/>
            <person name="Song W."/>
            <person name="Liu M.-Y."/>
            <person name="Jin L."/>
            <person name="Dykes-Hoberg M."/>
            <person name="Lin C.-L.G."/>
            <person name="Bowers W.J."/>
            <person name="Federoff H.J."/>
            <person name="Sternweis P.C."/>
            <person name="Rothstein J.D."/>
        </authorList>
    </citation>
    <scope>NUCLEOTIDE SEQUENCE [MRNA]</scope>
    <scope>FUNCTION</scope>
    <scope>INTERACTION WITH RHOA; GNA13 AND SLC1A6</scope>
</reference>
<reference key="2">
    <citation type="journal article" date="2012" name="Nat. Commun.">
        <title>Quantitative maps of protein phosphorylation sites across 14 different rat organs and tissues.</title>
        <authorList>
            <person name="Lundby A."/>
            <person name="Secher A."/>
            <person name="Lage K."/>
            <person name="Nordsborg N.B."/>
            <person name="Dmytriyev A."/>
            <person name="Lundby C."/>
            <person name="Olsen J.V."/>
        </authorList>
    </citation>
    <scope>PHOSPHORYLATION [LARGE SCALE ANALYSIS] AT SER-30; SER-51; SER-268; SER-272; SER-288; THR-676; THR-680; SER-1462; SER-1463 AND SER-1485</scope>
    <scope>IDENTIFICATION BY MASS SPECTROMETRY [LARGE SCALE ANALYSIS]</scope>
</reference>